<protein>
    <recommendedName>
        <fullName>GTP-binding nuclear protein Ran</fullName>
    </recommendedName>
    <alternativeName>
        <fullName>GTPase Ran</fullName>
    </alternativeName>
    <alternativeName>
        <fullName>Ras-like protein TC4</fullName>
    </alternativeName>
    <alternativeName>
        <fullName>Ras-related nuclear protein</fullName>
    </alternativeName>
</protein>
<evidence type="ECO:0000250" key="1">
    <source>
        <dbReference type="UniProtKB" id="P62825"/>
    </source>
</evidence>
<evidence type="ECO:0000250" key="2">
    <source>
        <dbReference type="UniProtKB" id="P62826"/>
    </source>
</evidence>
<evidence type="ECO:0000250" key="3">
    <source>
        <dbReference type="UniProtKB" id="P62827"/>
    </source>
</evidence>
<evidence type="ECO:0000255" key="4">
    <source>
        <dbReference type="PROSITE-ProRule" id="PRU00752"/>
    </source>
</evidence>
<evidence type="ECO:0000305" key="5"/>
<organism>
    <name type="scientific">Onchocerca volvulus</name>
    <dbReference type="NCBI Taxonomy" id="6282"/>
    <lineage>
        <taxon>Eukaryota</taxon>
        <taxon>Metazoa</taxon>
        <taxon>Ecdysozoa</taxon>
        <taxon>Nematoda</taxon>
        <taxon>Chromadorea</taxon>
        <taxon>Rhabditida</taxon>
        <taxon>Spirurina</taxon>
        <taxon>Spiruromorpha</taxon>
        <taxon>Filarioidea</taxon>
        <taxon>Onchocercidae</taxon>
        <taxon>Onchocerca</taxon>
    </lineage>
</organism>
<sequence>MATGDDIPTFKLVLVGDGGTGKTTFVKRHLTGDPEKKYVATLGVEVHPLIFHTNRGQIRFNVWDTAGQEKFGGLRDGYYIQGQCAIIMFDVTARVTYKNVPNWHRDLARVCENIPIVLCGNFVDVKDRKVKAKTITFHRKKNLQYYDISAKSNYNFEKPSLWLVRKLLGDPNLEFVAMPALAPPEVQMDPTMVAQYEQEIAAAANAELPDDDEDL</sequence>
<accession>P38544</accession>
<reference key="1">
    <citation type="journal article" date="1992" name="Mol. Biochem. Parasitol.">
        <title>Filarial parasites contain a ras homolog of the TC4/ran/Spil family.</title>
        <authorList>
            <person name="Dissanayake S."/>
            <person name="Xu M."/>
            <person name="Piessens W.F."/>
        </authorList>
    </citation>
    <scope>NUCLEOTIDE SEQUENCE [MRNA]</scope>
</reference>
<feature type="chain" id="PRO_0000208713" description="GTP-binding nuclear protein Ran">
    <location>
        <begin position="1"/>
        <end position="215"/>
    </location>
</feature>
<feature type="domain" description="Small GTPase Ran-type" evidence="4">
    <location>
        <begin position="6"/>
        <end position="170"/>
    </location>
</feature>
<feature type="region of interest" description="Switch-I" evidence="4">
    <location>
        <begin position="36"/>
        <end position="44"/>
    </location>
</feature>
<feature type="region of interest" description="Switch-II" evidence="4">
    <location>
        <begin position="67"/>
        <end position="83"/>
    </location>
</feature>
<feature type="region of interest" description="Interaction with RANBP1" evidence="2">
    <location>
        <begin position="210"/>
        <end position="215"/>
    </location>
</feature>
<feature type="binding site" evidence="1">
    <location>
        <begin position="17"/>
        <end position="24"/>
    </location>
    <ligand>
        <name>GTP</name>
        <dbReference type="ChEBI" id="CHEBI:37565"/>
    </ligand>
</feature>
<feature type="binding site" evidence="2">
    <location>
        <begin position="35"/>
        <end position="41"/>
    </location>
    <ligand>
        <name>GTP</name>
        <dbReference type="ChEBI" id="CHEBI:37565"/>
    </ligand>
</feature>
<feature type="binding site" evidence="1">
    <location>
        <position position="67"/>
    </location>
    <ligand>
        <name>GTP</name>
        <dbReference type="ChEBI" id="CHEBI:37565"/>
    </ligand>
</feature>
<feature type="binding site" evidence="1">
    <location>
        <begin position="121"/>
        <end position="124"/>
    </location>
    <ligand>
        <name>GTP</name>
        <dbReference type="ChEBI" id="CHEBI:37565"/>
    </ligand>
</feature>
<feature type="binding site" evidence="1">
    <location>
        <begin position="149"/>
        <end position="151"/>
    </location>
    <ligand>
        <name>GTP</name>
        <dbReference type="ChEBI" id="CHEBI:37565"/>
    </ligand>
</feature>
<feature type="site" description="Essential for GTP hydrolysis" evidence="2">
    <location>
        <position position="68"/>
    </location>
</feature>
<comment type="function">
    <text evidence="2">GTPase involved in nucleocytoplasmic transport, participating both to the import and the export from the nucleus of proteins and RNAs. Switches between a cytoplasmic GDP- and a nuclear GTP-bound state by nucleotide exchange and GTP hydrolysis. Nuclear import receptors such as importin beta bind their substrates only in the absence of GTP-bound RAN and release them upon direct interaction with GTP-bound RAN, while export receptors behave in the opposite way. Thereby, RAN controls cargo loading and release by transport receptors in the proper compartment and ensures the directionality of the transport. Interaction with RANBP1 induces a conformation change in the complex formed by XPO1 and RAN that triggers the release of the nuclear export signal of cargo proteins. RAN (GTP-bound form) triggers microtubule assembly at mitotic chromosomes and is required for normal mitotic spindle assembly and chromosome segregation. Required for normal progress through mitosis.</text>
</comment>
<comment type="cofactor">
    <cofactor evidence="2">
        <name>Mg(2+)</name>
        <dbReference type="ChEBI" id="CHEBI:18420"/>
    </cofactor>
    <text evidence="2">Mg(2+) interacts primarily with the phosphate groups of the bound guanine nucleotide.</text>
</comment>
<comment type="subunit">
    <text evidence="1 2 3">Monomer. Interacts with RANGAP1, which promotes RAN-mediated GTP hydrolysis. Interacts with KPNB1. Interaction with KPNB1 inhibits RANGAP1-mediated stimulation of GTPase activity. Interacts with RCC1 which promotes the exchange of RAN-bound GDP by GTP. Interaction with KPNB1 inhibits RCC1-mediated exchange of RAN-bound GDP by GTP. Interacts (GTP-bound form) with TNPO1; the interaction is direct. Interacts with KPNB1 and with TNPO1; both inhibit RAN GTPase activity. Interacts (via C-terminus) with RANBP1, which alleviates the inhibition of RAN GTPase activity. Interacts with RANGRF, which promotes the release of bound guanine nucleotide. RANGRF and RCC1 compete for an overlapping binding site on RAN. Identified in a complex with KPNA2 and CSE1L; interaction with RANBP1 mediates dissociation of RAN from this complex. Interaction with both RANBP1 and KPNA2 promotes dissociation of the complex between RAN and KPNB1. Identified in a complex composed of RAN, RANGAP1 and RANBP1. Identified in a complex that contains TNPO1, RAN and RANBP1. Identified in a nuclear export complex with XPO1. Interaction with RANBP1 or RANBP2 induces a conformation change in the complex formed by XPO1 and RAN that triggers the release of the nuclear export signal of cargo proteins. Component of a nuclear export receptor complex composed of KPNB1, RAN, SNUPN and XPO1.</text>
</comment>
<comment type="subcellular location">
    <subcellularLocation>
        <location evidence="2">Nucleus</location>
    </subcellularLocation>
    <subcellularLocation>
        <location evidence="2">Nucleus envelope</location>
    </subcellularLocation>
    <subcellularLocation>
        <location evidence="2">Cytoplasm</location>
        <location evidence="2">Cytosol</location>
    </subcellularLocation>
    <subcellularLocation>
        <location evidence="2">Cytoplasm</location>
    </subcellularLocation>
    <text evidence="2">Predominantly nuclear during interphase. Becomes dispersed throughout the cytoplasm during mitosis (By similarity).</text>
</comment>
<comment type="similarity">
    <text evidence="4 5">Belongs to the small GTPase superfamily. Ran family.</text>
</comment>
<name>RAN_ONCVO</name>
<keyword id="KW-0963">Cytoplasm</keyword>
<keyword id="KW-0342">GTP-binding</keyword>
<keyword id="KW-0460">Magnesium</keyword>
<keyword id="KW-0479">Metal-binding</keyword>
<keyword id="KW-0547">Nucleotide-binding</keyword>
<keyword id="KW-0539">Nucleus</keyword>
<keyword id="KW-0653">Protein transport</keyword>
<keyword id="KW-1185">Reference proteome</keyword>
<keyword id="KW-0813">Transport</keyword>
<dbReference type="EMBL" id="M98811">
    <property type="status" value="NOT_ANNOTATED_CDS"/>
    <property type="molecule type" value="mRNA"/>
</dbReference>
<dbReference type="EMBL" id="M98812">
    <property type="status" value="NOT_ANNOTATED_CDS"/>
    <property type="molecule type" value="mRNA"/>
</dbReference>
<dbReference type="PIR" id="B48463">
    <property type="entry name" value="B48463"/>
</dbReference>
<dbReference type="SMR" id="P38544"/>
<dbReference type="STRING" id="6282.P38544"/>
<dbReference type="HOGENOM" id="CLU_041217_13_0_1"/>
<dbReference type="Proteomes" id="UP000024404">
    <property type="component" value="Unassembled WGS sequence"/>
</dbReference>
<dbReference type="GO" id="GO:0005829">
    <property type="term" value="C:cytosol"/>
    <property type="evidence" value="ECO:0007669"/>
    <property type="project" value="UniProtKB-SubCell"/>
</dbReference>
<dbReference type="GO" id="GO:0005635">
    <property type="term" value="C:nuclear envelope"/>
    <property type="evidence" value="ECO:0007669"/>
    <property type="project" value="UniProtKB-SubCell"/>
</dbReference>
<dbReference type="GO" id="GO:0005525">
    <property type="term" value="F:GTP binding"/>
    <property type="evidence" value="ECO:0007669"/>
    <property type="project" value="UniProtKB-KW"/>
</dbReference>
<dbReference type="GO" id="GO:0003924">
    <property type="term" value="F:GTPase activity"/>
    <property type="evidence" value="ECO:0007669"/>
    <property type="project" value="InterPro"/>
</dbReference>
<dbReference type="GO" id="GO:0046872">
    <property type="term" value="F:metal ion binding"/>
    <property type="evidence" value="ECO:0007669"/>
    <property type="project" value="UniProtKB-KW"/>
</dbReference>
<dbReference type="GO" id="GO:0006606">
    <property type="term" value="P:protein import into nucleus"/>
    <property type="evidence" value="ECO:0007669"/>
    <property type="project" value="TreeGrafter"/>
</dbReference>
<dbReference type="GO" id="GO:0000054">
    <property type="term" value="P:ribosomal subunit export from nucleus"/>
    <property type="evidence" value="ECO:0007669"/>
    <property type="project" value="TreeGrafter"/>
</dbReference>
<dbReference type="CDD" id="cd00877">
    <property type="entry name" value="Ran"/>
    <property type="match status" value="1"/>
</dbReference>
<dbReference type="FunFam" id="3.40.50.300:FF:000131">
    <property type="entry name" value="GTP-binding nuclear protein Ran"/>
    <property type="match status" value="1"/>
</dbReference>
<dbReference type="Gene3D" id="3.40.50.300">
    <property type="entry name" value="P-loop containing nucleotide triphosphate hydrolases"/>
    <property type="match status" value="1"/>
</dbReference>
<dbReference type="InterPro" id="IPR027417">
    <property type="entry name" value="P-loop_NTPase"/>
</dbReference>
<dbReference type="InterPro" id="IPR002041">
    <property type="entry name" value="Ran_GTPase"/>
</dbReference>
<dbReference type="InterPro" id="IPR005225">
    <property type="entry name" value="Small_GTP-bd"/>
</dbReference>
<dbReference type="InterPro" id="IPR001806">
    <property type="entry name" value="Small_GTPase"/>
</dbReference>
<dbReference type="NCBIfam" id="TIGR00231">
    <property type="entry name" value="small_GTP"/>
    <property type="match status" value="1"/>
</dbReference>
<dbReference type="PANTHER" id="PTHR24071:SF0">
    <property type="entry name" value="GTP-BINDING NUCLEAR PROTEIN RAN"/>
    <property type="match status" value="1"/>
</dbReference>
<dbReference type="PANTHER" id="PTHR24071">
    <property type="entry name" value="RAN GTPASE"/>
    <property type="match status" value="1"/>
</dbReference>
<dbReference type="Pfam" id="PF00071">
    <property type="entry name" value="Ras"/>
    <property type="match status" value="1"/>
</dbReference>
<dbReference type="PRINTS" id="PR00627">
    <property type="entry name" value="GTPRANTC4"/>
</dbReference>
<dbReference type="SMART" id="SM00175">
    <property type="entry name" value="RAB"/>
    <property type="match status" value="1"/>
</dbReference>
<dbReference type="SMART" id="SM00176">
    <property type="entry name" value="RAN"/>
    <property type="match status" value="1"/>
</dbReference>
<dbReference type="SMART" id="SM00173">
    <property type="entry name" value="RAS"/>
    <property type="match status" value="1"/>
</dbReference>
<dbReference type="SMART" id="SM00174">
    <property type="entry name" value="RHO"/>
    <property type="match status" value="1"/>
</dbReference>
<dbReference type="SUPFAM" id="SSF52540">
    <property type="entry name" value="P-loop containing nucleoside triphosphate hydrolases"/>
    <property type="match status" value="1"/>
</dbReference>
<dbReference type="PROSITE" id="PS51418">
    <property type="entry name" value="RAN"/>
    <property type="match status" value="1"/>
</dbReference>
<gene>
    <name type="primary">ran-1</name>
</gene>
<proteinExistence type="evidence at transcript level"/>